<proteinExistence type="inferred from homology"/>
<reference key="1">
    <citation type="journal article" date="2005" name="Nature">
        <title>The map-based sequence of the rice genome.</title>
        <authorList>
            <consortium name="International rice genome sequencing project (IRGSP)"/>
        </authorList>
    </citation>
    <scope>NUCLEOTIDE SEQUENCE [LARGE SCALE GENOMIC DNA]</scope>
    <source>
        <strain>cv. Nipponbare</strain>
    </source>
</reference>
<reference key="2">
    <citation type="journal article" date="2008" name="Nucleic Acids Res.">
        <title>The rice annotation project database (RAP-DB): 2008 update.</title>
        <authorList>
            <consortium name="The rice annotation project (RAP)"/>
        </authorList>
    </citation>
    <scope>GENOME REANNOTATION</scope>
    <source>
        <strain>cv. Nipponbare</strain>
    </source>
</reference>
<reference key="3">
    <citation type="journal article" date="2013" name="Rice">
        <title>Improvement of the Oryza sativa Nipponbare reference genome using next generation sequence and optical map data.</title>
        <authorList>
            <person name="Kawahara Y."/>
            <person name="de la Bastide M."/>
            <person name="Hamilton J.P."/>
            <person name="Kanamori H."/>
            <person name="McCombie W.R."/>
            <person name="Ouyang S."/>
            <person name="Schwartz D.C."/>
            <person name="Tanaka T."/>
            <person name="Wu J."/>
            <person name="Zhou S."/>
            <person name="Childs K.L."/>
            <person name="Davidson R.M."/>
            <person name="Lin H."/>
            <person name="Quesada-Ocampo L."/>
            <person name="Vaillancourt B."/>
            <person name="Sakai H."/>
            <person name="Lee S.S."/>
            <person name="Kim J."/>
            <person name="Numa H."/>
            <person name="Itoh T."/>
            <person name="Buell C.R."/>
            <person name="Matsumoto T."/>
        </authorList>
    </citation>
    <scope>GENOME REANNOTATION</scope>
    <source>
        <strain>cv. Nipponbare</strain>
    </source>
</reference>
<reference key="4">
    <citation type="journal article" date="2005" name="PLoS Biol.">
        <title>The genomes of Oryza sativa: a history of duplications.</title>
        <authorList>
            <person name="Yu J."/>
            <person name="Wang J."/>
            <person name="Lin W."/>
            <person name="Li S."/>
            <person name="Li H."/>
            <person name="Zhou J."/>
            <person name="Ni P."/>
            <person name="Dong W."/>
            <person name="Hu S."/>
            <person name="Zeng C."/>
            <person name="Zhang J."/>
            <person name="Zhang Y."/>
            <person name="Li R."/>
            <person name="Xu Z."/>
            <person name="Li S."/>
            <person name="Li X."/>
            <person name="Zheng H."/>
            <person name="Cong L."/>
            <person name="Lin L."/>
            <person name="Yin J."/>
            <person name="Geng J."/>
            <person name="Li G."/>
            <person name="Shi J."/>
            <person name="Liu J."/>
            <person name="Lv H."/>
            <person name="Li J."/>
            <person name="Wang J."/>
            <person name="Deng Y."/>
            <person name="Ran L."/>
            <person name="Shi X."/>
            <person name="Wang X."/>
            <person name="Wu Q."/>
            <person name="Li C."/>
            <person name="Ren X."/>
            <person name="Wang J."/>
            <person name="Wang X."/>
            <person name="Li D."/>
            <person name="Liu D."/>
            <person name="Zhang X."/>
            <person name="Ji Z."/>
            <person name="Zhao W."/>
            <person name="Sun Y."/>
            <person name="Zhang Z."/>
            <person name="Bao J."/>
            <person name="Han Y."/>
            <person name="Dong L."/>
            <person name="Ji J."/>
            <person name="Chen P."/>
            <person name="Wu S."/>
            <person name="Liu J."/>
            <person name="Xiao Y."/>
            <person name="Bu D."/>
            <person name="Tan J."/>
            <person name="Yang L."/>
            <person name="Ye C."/>
            <person name="Zhang J."/>
            <person name="Xu J."/>
            <person name="Zhou Y."/>
            <person name="Yu Y."/>
            <person name="Zhang B."/>
            <person name="Zhuang S."/>
            <person name="Wei H."/>
            <person name="Liu B."/>
            <person name="Lei M."/>
            <person name="Yu H."/>
            <person name="Li Y."/>
            <person name="Xu H."/>
            <person name="Wei S."/>
            <person name="He X."/>
            <person name="Fang L."/>
            <person name="Zhang Z."/>
            <person name="Zhang Y."/>
            <person name="Huang X."/>
            <person name="Su Z."/>
            <person name="Tong W."/>
            <person name="Li J."/>
            <person name="Tong Z."/>
            <person name="Li S."/>
            <person name="Ye J."/>
            <person name="Wang L."/>
            <person name="Fang L."/>
            <person name="Lei T."/>
            <person name="Chen C.-S."/>
            <person name="Chen H.-C."/>
            <person name="Xu Z."/>
            <person name="Li H."/>
            <person name="Huang H."/>
            <person name="Zhang F."/>
            <person name="Xu H."/>
            <person name="Li N."/>
            <person name="Zhao C."/>
            <person name="Li S."/>
            <person name="Dong L."/>
            <person name="Huang Y."/>
            <person name="Li L."/>
            <person name="Xi Y."/>
            <person name="Qi Q."/>
            <person name="Li W."/>
            <person name="Zhang B."/>
            <person name="Hu W."/>
            <person name="Zhang Y."/>
            <person name="Tian X."/>
            <person name="Jiao Y."/>
            <person name="Liang X."/>
            <person name="Jin J."/>
            <person name="Gao L."/>
            <person name="Zheng W."/>
            <person name="Hao B."/>
            <person name="Liu S.-M."/>
            <person name="Wang W."/>
            <person name="Yuan L."/>
            <person name="Cao M."/>
            <person name="McDermott J."/>
            <person name="Samudrala R."/>
            <person name="Wang J."/>
            <person name="Wong G.K.-S."/>
            <person name="Yang H."/>
        </authorList>
    </citation>
    <scope>NUCLEOTIDE SEQUENCE [LARGE SCALE GENOMIC DNA]</scope>
    <source>
        <strain>cv. Nipponbare</strain>
    </source>
</reference>
<reference key="5">
    <citation type="journal article" date="2015" name="Mol. Cells">
        <title>Comparative analysis of the conserved functions of Arabidopsis DRL1 and yeast KTI12.</title>
        <authorList>
            <person name="Jun S.E."/>
            <person name="Cho K.-H."/>
            <person name="Hwang J.-Y."/>
            <person name="Abdel-Fattah W."/>
            <person name="Hammermeister A."/>
            <person name="Schaffrath R."/>
            <person name="Bowman J.L."/>
            <person name="Kim G.-T."/>
        </authorList>
    </citation>
    <scope>FUNCTION</scope>
</reference>
<accession>B9GAG9</accession>
<accession>C7J842</accession>
<sequence length="301" mass="33438">MALVVICGQPCSGKSAAAACLAAALCSSTSDLTVRIIDESSLHLGRNDSYKDMVVEKNLRGVLRSEVDRSVSRDSIIVVDSLNNIKGYRYELWCLARASGIRYCVLFCDTEVDHCREWNTKRQEKGEPTYDNNIFDDLVSRFEKPDRRNRWDSPLFELFPSRDGVMESSPVIAEAVSYLTKKVDSKTRDVKVLQPTIATQTARTTEANSLYEMDKATQEVINAIVEAQSCGLGLPVNKISLGPDLPTICLQRSVGLPELRSLRRTFIKLAGQYSLSGPPPPADADSATRMFVDYLNREISS</sequence>
<organism evidence="10">
    <name type="scientific">Oryza sativa subsp. japonica</name>
    <name type="common">Rice</name>
    <dbReference type="NCBI Taxonomy" id="39947"/>
    <lineage>
        <taxon>Eukaryota</taxon>
        <taxon>Viridiplantae</taxon>
        <taxon>Streptophyta</taxon>
        <taxon>Embryophyta</taxon>
        <taxon>Tracheophyta</taxon>
        <taxon>Spermatophyta</taxon>
        <taxon>Magnoliopsida</taxon>
        <taxon>Liliopsida</taxon>
        <taxon>Poales</taxon>
        <taxon>Poaceae</taxon>
        <taxon>BOP clade</taxon>
        <taxon>Oryzoideae</taxon>
        <taxon>Oryzeae</taxon>
        <taxon>Oryzinae</taxon>
        <taxon>Oryza</taxon>
        <taxon>Oryza sativa</taxon>
    </lineage>
</organism>
<keyword id="KW-0067">ATP-binding</keyword>
<keyword id="KW-0963">Cytoplasm</keyword>
<keyword id="KW-0547">Nucleotide-binding</keyword>
<keyword id="KW-0539">Nucleus</keyword>
<keyword id="KW-1185">Reference proteome</keyword>
<keyword id="KW-0804">Transcription</keyword>
<keyword id="KW-0805">Transcription regulation</keyword>
<keyword id="KW-0819">tRNA processing</keyword>
<evidence type="ECO:0000250" key="1">
    <source>
        <dbReference type="UniProtKB" id="P34253"/>
    </source>
</evidence>
<evidence type="ECO:0000250" key="2">
    <source>
        <dbReference type="UniProtKB" id="Q9LMH0"/>
    </source>
</evidence>
<evidence type="ECO:0000255" key="3"/>
<evidence type="ECO:0000255" key="4">
    <source>
        <dbReference type="PROSITE-ProRule" id="PRU00499"/>
    </source>
</evidence>
<evidence type="ECO:0000269" key="5">
    <source>
    </source>
</evidence>
<evidence type="ECO:0000303" key="6">
    <source>
    </source>
</evidence>
<evidence type="ECO:0000305" key="7"/>
<evidence type="ECO:0000312" key="8">
    <source>
        <dbReference type="EMBL" id="BAH95225.1"/>
    </source>
</evidence>
<evidence type="ECO:0000312" key="9">
    <source>
        <dbReference type="EMBL" id="EEE52025.1"/>
    </source>
</evidence>
<evidence type="ECO:0000312" key="10">
    <source>
        <dbReference type="Proteomes" id="UP000059680"/>
    </source>
</evidence>
<gene>
    <name evidence="7" type="primary">KTI12</name>
    <name evidence="6" type="synonym">DRL1</name>
    <name evidence="8" type="ordered locus">Os11g0312782</name>
    <name evidence="9" type="ORF">OsJ_33743</name>
</gene>
<comment type="function">
    <text evidence="2 5">Elongator complex-associated factor that is not a structural subunit but rather transiently contacts the complex (PubMed:25518926). Regulates both meristem activity and organ growth; acts as a positive regulator of adaxial leaf patterning. Required for an early step in synthesis of 5-carbamoylmethyl (ncm5) groups present on uridines (ncm5U) at the wobble position in tRNA (By similarity).</text>
</comment>
<comment type="subunit">
    <text evidence="1 2">Interacts with the elongator complex (By similarity). Binds to calmodulin in a calcium-dependent manner (By similarity).</text>
</comment>
<comment type="subcellular location">
    <subcellularLocation>
        <location evidence="1">Cytoplasm</location>
    </subcellularLocation>
    <subcellularLocation>
        <location evidence="1">Nucleus</location>
    </subcellularLocation>
</comment>
<comment type="similarity">
    <text evidence="7">Belongs to the KTI12 family.</text>
</comment>
<comment type="sequence caution" evidence="7">
    <conflict type="erroneous gene model prediction">
        <sequence resource="EMBL-CDS" id="BAH95225"/>
    </conflict>
</comment>
<name>KTI12_ORYSJ</name>
<feature type="chain" id="PRO_0000432191" description="Protein KTI12 homolog">
    <location>
        <begin position="1"/>
        <end position="301"/>
    </location>
</feature>
<feature type="region of interest" description="Calmodulin-binding" evidence="3">
    <location>
        <begin position="262"/>
        <end position="275"/>
    </location>
</feature>
<feature type="binding site" evidence="4">
    <location>
        <begin position="8"/>
        <end position="15"/>
    </location>
    <ligand>
        <name>ATP</name>
        <dbReference type="ChEBI" id="CHEBI:30616"/>
    </ligand>
</feature>
<protein>
    <recommendedName>
        <fullName evidence="7">Protein KTI12 homolog</fullName>
        <shortName evidence="7">OsKTI12</shortName>
    </recommendedName>
    <alternativeName>
        <fullName evidence="6">Protein DEFORMED ROOTS AND LEAVES 1</fullName>
        <shortName evidence="6">OsDRL1</shortName>
    </alternativeName>
</protein>
<dbReference type="EMBL" id="AP008217">
    <property type="protein sequence ID" value="BAH95225.1"/>
    <property type="status" value="ALT_SEQ"/>
    <property type="molecule type" value="Genomic_DNA"/>
</dbReference>
<dbReference type="EMBL" id="AP014967">
    <property type="status" value="NOT_ANNOTATED_CDS"/>
    <property type="molecule type" value="Genomic_DNA"/>
</dbReference>
<dbReference type="EMBL" id="CM000148">
    <property type="protein sequence ID" value="EEE52025.1"/>
    <property type="molecule type" value="Genomic_DNA"/>
</dbReference>
<dbReference type="RefSeq" id="XP_015615301.1">
    <property type="nucleotide sequence ID" value="XM_015759815.1"/>
</dbReference>
<dbReference type="SMR" id="B9GAG9"/>
<dbReference type="FunCoup" id="B9GAG9">
    <property type="interactions" value="1686"/>
</dbReference>
<dbReference type="STRING" id="39947.B9GAG9"/>
<dbReference type="PaxDb" id="39947-B9GAG9"/>
<dbReference type="KEGG" id="dosa:Os11g0312782"/>
<dbReference type="eggNOG" id="KOG3062">
    <property type="taxonomic scope" value="Eukaryota"/>
</dbReference>
<dbReference type="InParanoid" id="B9GAG9"/>
<dbReference type="OrthoDB" id="9972657at2759"/>
<dbReference type="Proteomes" id="UP000000763">
    <property type="component" value="Chromosome 11"/>
</dbReference>
<dbReference type="Proteomes" id="UP000007752">
    <property type="component" value="Chromosome 11"/>
</dbReference>
<dbReference type="Proteomes" id="UP000059680">
    <property type="component" value="Chromosome 11"/>
</dbReference>
<dbReference type="GO" id="GO:0005737">
    <property type="term" value="C:cytoplasm"/>
    <property type="evidence" value="ECO:0007669"/>
    <property type="project" value="UniProtKB-SubCell"/>
</dbReference>
<dbReference type="GO" id="GO:0033588">
    <property type="term" value="C:elongator holoenzyme complex"/>
    <property type="evidence" value="ECO:0000314"/>
    <property type="project" value="UniProtKB"/>
</dbReference>
<dbReference type="GO" id="GO:0005634">
    <property type="term" value="C:nucleus"/>
    <property type="evidence" value="ECO:0007669"/>
    <property type="project" value="UniProtKB-SubCell"/>
</dbReference>
<dbReference type="GO" id="GO:0005524">
    <property type="term" value="F:ATP binding"/>
    <property type="evidence" value="ECO:0007669"/>
    <property type="project" value="UniProtKB-KW"/>
</dbReference>
<dbReference type="GO" id="GO:0005516">
    <property type="term" value="F:calmodulin binding"/>
    <property type="evidence" value="ECO:0000250"/>
    <property type="project" value="UniProtKB"/>
</dbReference>
<dbReference type="GO" id="GO:0080178">
    <property type="term" value="P:5-carbamoylmethyl uridine residue modification"/>
    <property type="evidence" value="ECO:0000250"/>
    <property type="project" value="UniProtKB"/>
</dbReference>
<dbReference type="GO" id="GO:0006357">
    <property type="term" value="P:regulation of transcription by RNA polymerase II"/>
    <property type="evidence" value="ECO:0000314"/>
    <property type="project" value="UniProtKB"/>
</dbReference>
<dbReference type="GO" id="GO:0006400">
    <property type="term" value="P:tRNA modification"/>
    <property type="evidence" value="ECO:0000314"/>
    <property type="project" value="UniProtKB"/>
</dbReference>
<dbReference type="GO" id="GO:0002098">
    <property type="term" value="P:tRNA wobble uridine modification"/>
    <property type="evidence" value="ECO:0000318"/>
    <property type="project" value="GO_Central"/>
</dbReference>
<dbReference type="FunFam" id="3.40.50.300:FF:000827">
    <property type="entry name" value="KTI12 chromatin-associated homolog"/>
    <property type="match status" value="1"/>
</dbReference>
<dbReference type="Gene3D" id="3.40.50.300">
    <property type="entry name" value="P-loop containing nucleotide triphosphate hydrolases"/>
    <property type="match status" value="1"/>
</dbReference>
<dbReference type="InterPro" id="IPR013641">
    <property type="entry name" value="KTI12/PSTK"/>
</dbReference>
<dbReference type="InterPro" id="IPR027417">
    <property type="entry name" value="P-loop_NTPase"/>
</dbReference>
<dbReference type="PANTHER" id="PTHR12435">
    <property type="match status" value="1"/>
</dbReference>
<dbReference type="Pfam" id="PF08433">
    <property type="entry name" value="KTI12"/>
    <property type="match status" value="1"/>
</dbReference>
<dbReference type="SUPFAM" id="SSF52540">
    <property type="entry name" value="P-loop containing nucleoside triphosphate hydrolases"/>
    <property type="match status" value="1"/>
</dbReference>